<comment type="function">
    <text evidence="1">Required for O-acetylhomoserine sulfhydrylase (OAHS)-independent homocysteine (Hcy) biosynthesis. Together with MJ0099, catalyzes the condensation of sulfide with aspartate semialdehyde to generate homocysteine. Likely functions through persulfide intermediate.</text>
</comment>
<comment type="catalytic activity">
    <reaction evidence="1">
        <text>L-aspartate 4-semialdehyde + reduced 2[4Fe-4S]-[ferredoxin] + hydrogen sulfide + 3 H(+) = oxidized 2[4Fe-4S]-[ferredoxin] + L-homocysteine + H2O</text>
        <dbReference type="Rhea" id="RHEA:58412"/>
        <dbReference type="Rhea" id="RHEA-COMP:10002"/>
        <dbReference type="Rhea" id="RHEA-COMP:10004"/>
        <dbReference type="ChEBI" id="CHEBI:15377"/>
        <dbReference type="ChEBI" id="CHEBI:15378"/>
        <dbReference type="ChEBI" id="CHEBI:29919"/>
        <dbReference type="ChEBI" id="CHEBI:33722"/>
        <dbReference type="ChEBI" id="CHEBI:33723"/>
        <dbReference type="ChEBI" id="CHEBI:58199"/>
        <dbReference type="ChEBI" id="CHEBI:537519"/>
        <dbReference type="EC" id="2.8.1.16"/>
    </reaction>
</comment>
<comment type="activity regulation">
    <text evidence="4">The ligand-induced conformational reorganization of the protein could be an important regulatory mechanism.</text>
</comment>
<comment type="pathway">
    <text evidence="1">Amino-acid biosynthesis.</text>
</comment>
<comment type="subunit">
    <text evidence="1 3 4">Homodimer (PubMed:18931440, PubMed:20026078). May form a complex with MJ0099 (By similarity).</text>
</comment>
<comment type="domain">
    <text evidence="4">The C-terminal cystathionine beta-synthase (CBS) domains can bind different numbers of S-adenosyl-L-methionine (SAM) and S-methyl-5'-thioadenosine (MTA) ligands. Binding of SAM and MTA triggers a drastic conformational change in the protein, which evolves progressively from an open form in the absence of ligands to a closed form when the four sites are fully occupied.</text>
</comment>
<comment type="similarity">
    <text evidence="5">Belongs to the L-aspartate semialdehyde sulfurtransferase family.</text>
</comment>
<protein>
    <recommendedName>
        <fullName evidence="1">L-aspartate semialdehyde sulfurtransferase</fullName>
        <ecNumber evidence="1">2.8.1.16</ecNumber>
    </recommendedName>
</protein>
<reference key="1">
    <citation type="journal article" date="1996" name="Science">
        <title>Complete genome sequence of the methanogenic archaeon, Methanococcus jannaschii.</title>
        <authorList>
            <person name="Bult C.J."/>
            <person name="White O."/>
            <person name="Olsen G.J."/>
            <person name="Zhou L."/>
            <person name="Fleischmann R.D."/>
            <person name="Sutton G.G."/>
            <person name="Blake J.A."/>
            <person name="FitzGerald L.M."/>
            <person name="Clayton R.A."/>
            <person name="Gocayne J.D."/>
            <person name="Kerlavage A.R."/>
            <person name="Dougherty B.A."/>
            <person name="Tomb J.-F."/>
            <person name="Adams M.D."/>
            <person name="Reich C.I."/>
            <person name="Overbeek R."/>
            <person name="Kirkness E.F."/>
            <person name="Weinstock K.G."/>
            <person name="Merrick J.M."/>
            <person name="Glodek A."/>
            <person name="Scott J.L."/>
            <person name="Geoghagen N.S.M."/>
            <person name="Weidman J.F."/>
            <person name="Fuhrmann J.L."/>
            <person name="Nguyen D."/>
            <person name="Utterback T.R."/>
            <person name="Kelley J.M."/>
            <person name="Peterson J.D."/>
            <person name="Sadow P.W."/>
            <person name="Hanna M.C."/>
            <person name="Cotton M.D."/>
            <person name="Roberts K.M."/>
            <person name="Hurst M.A."/>
            <person name="Kaine B.P."/>
            <person name="Borodovsky M."/>
            <person name="Klenk H.-P."/>
            <person name="Fraser C.M."/>
            <person name="Smith H.O."/>
            <person name="Woese C.R."/>
            <person name="Venter J.C."/>
        </authorList>
    </citation>
    <scope>NUCLEOTIDE SEQUENCE [LARGE SCALE GENOMIC DNA]</scope>
    <source>
        <strain>ATCC 43067 / DSM 2661 / JAL-1 / JCM 10045 / NBRC 100440</strain>
    </source>
</reference>
<reference key="2">
    <citation type="journal article" date="2008" name="Acta Crystallogr. F">
        <title>Purification, crystallization and preliminary X-ray diffraction analysis of the CBS-domain pair from the Methanococcus jannaschii protein MJ0100.</title>
        <authorList>
            <person name="Lucas M."/>
            <person name="Kortazar D."/>
            <person name="Astigarraga E."/>
            <person name="Fernandez J.A."/>
            <person name="Mato J.M."/>
            <person name="Martinez-Chantar M.L."/>
            <person name="Martinez-Cruz L.A."/>
        </authorList>
    </citation>
    <scope>CRYSTALLIZATION</scope>
    <scope>SUBUNIT</scope>
</reference>
<reference evidence="6 7 8" key="3">
    <citation type="journal article" date="2010" name="J. Mol. Biol.">
        <title>Binding of S-methyl-5'-thioadenosine and S-adenosyl-L-methionine to protein MJ0100 triggers an open-to-closed conformational change in its CBS motif pair.</title>
        <authorList>
            <person name="Lucas M."/>
            <person name="Encinar J.A."/>
            <person name="Arribas E.A."/>
            <person name="Oyenarte I."/>
            <person name="Garcia I.G."/>
            <person name="Kortazar D."/>
            <person name="Fernandez J.A."/>
            <person name="Mato J.M."/>
            <person name="Martinez-Chantar M.L."/>
            <person name="Martinez-Cruz L.A."/>
        </authorList>
    </citation>
    <scope>X-RAY CRYSTALLOGRAPHY (1.60 ANGSTROMS) OF 388-509 IN COMPLEXES WITH S-ADENOSYL-L-METHIONINE AND S-METHYL-5'-THIOADENOSINE</scope>
    <scope>ACTIVITY REGULATION</scope>
    <scope>SUBUNIT</scope>
    <scope>DOMAIN</scope>
</reference>
<gene>
    <name type="ordered locus">MJ0100</name>
</gene>
<keyword id="KW-0002">3D-structure</keyword>
<keyword id="KW-0028">Amino-acid biosynthesis</keyword>
<keyword id="KW-0129">CBS domain</keyword>
<keyword id="KW-0486">Methionine biosynthesis</keyword>
<keyword id="KW-1185">Reference proteome</keyword>
<keyword id="KW-0677">Repeat</keyword>
<keyword id="KW-0808">Transferase</keyword>
<evidence type="ECO:0000250" key="1">
    <source>
        <dbReference type="UniProtKB" id="Q8TPT4"/>
    </source>
</evidence>
<evidence type="ECO:0000255" key="2">
    <source>
        <dbReference type="PROSITE-ProRule" id="PRU00703"/>
    </source>
</evidence>
<evidence type="ECO:0000269" key="3">
    <source>
    </source>
</evidence>
<evidence type="ECO:0000269" key="4">
    <source>
    </source>
</evidence>
<evidence type="ECO:0000305" key="5"/>
<evidence type="ECO:0007744" key="6">
    <source>
        <dbReference type="PDB" id="3KPB"/>
    </source>
</evidence>
<evidence type="ECO:0007744" key="7">
    <source>
        <dbReference type="PDB" id="3KPC"/>
    </source>
</evidence>
<evidence type="ECO:0007744" key="8">
    <source>
        <dbReference type="PDB" id="3KPD"/>
    </source>
</evidence>
<evidence type="ECO:0007829" key="9">
    <source>
        <dbReference type="PDB" id="3KPB"/>
    </source>
</evidence>
<evidence type="ECO:0007829" key="10">
    <source>
        <dbReference type="PDB" id="3KPD"/>
    </source>
</evidence>
<accession>Q57564</accession>
<feature type="chain" id="PRO_0000106693" description="L-aspartate semialdehyde sulfurtransferase">
    <location>
        <begin position="1"/>
        <end position="509"/>
    </location>
</feature>
<feature type="domain" description="CBS 1" evidence="2">
    <location>
        <begin position="394"/>
        <end position="450"/>
    </location>
</feature>
<feature type="domain" description="CBS 2" evidence="2">
    <location>
        <begin position="455"/>
        <end position="509"/>
    </location>
</feature>
<feature type="active site" description="Cysteine persulfide intermediate" evidence="1">
    <location>
        <position position="133"/>
    </location>
</feature>
<feature type="binding site" evidence="4">
    <location>
        <position position="395"/>
    </location>
    <ligand>
        <name>S-methyl-5'-thioadenosine</name>
        <dbReference type="ChEBI" id="CHEBI:17509"/>
    </ligand>
</feature>
<feature type="binding site" evidence="4">
    <location>
        <position position="399"/>
    </location>
    <ligand>
        <name>S-methyl-5'-thioadenosine</name>
        <dbReference type="ChEBI" id="CHEBI:17509"/>
    </ligand>
</feature>
<feature type="binding site" evidence="4">
    <location>
        <position position="421"/>
    </location>
    <ligand>
        <name>S-methyl-5'-thioadenosine</name>
        <dbReference type="ChEBI" id="CHEBI:17509"/>
    </ligand>
</feature>
<feature type="binding site" evidence="4">
    <location>
        <position position="439"/>
    </location>
    <ligand>
        <name>S-adenosyl-L-methionine</name>
        <dbReference type="ChEBI" id="CHEBI:59789"/>
    </ligand>
</feature>
<feature type="binding site" evidence="4">
    <location>
        <position position="456"/>
    </location>
    <ligand>
        <name>S-adenosyl-L-methionine</name>
        <dbReference type="ChEBI" id="CHEBI:59789"/>
    </ligand>
</feature>
<feature type="binding site" evidence="4">
    <location>
        <position position="460"/>
    </location>
    <ligand>
        <name>S-adenosyl-L-methionine</name>
        <dbReference type="ChEBI" id="CHEBI:59789"/>
    </ligand>
</feature>
<feature type="binding site" evidence="4">
    <location>
        <begin position="479"/>
        <end position="482"/>
    </location>
    <ligand>
        <name>S-adenosyl-L-methionine</name>
        <dbReference type="ChEBI" id="CHEBI:59789"/>
    </ligand>
</feature>
<feature type="binding site" evidence="4">
    <location>
        <begin position="497"/>
        <end position="500"/>
    </location>
    <ligand>
        <name>S-methyl-5'-thioadenosine</name>
        <dbReference type="ChEBI" id="CHEBI:17509"/>
    </ligand>
</feature>
<feature type="helix" evidence="9">
    <location>
        <begin position="390"/>
        <end position="393"/>
    </location>
</feature>
<feature type="strand" evidence="10">
    <location>
        <begin position="394"/>
        <end position="397"/>
    </location>
</feature>
<feature type="helix" evidence="9">
    <location>
        <begin position="407"/>
        <end position="417"/>
    </location>
</feature>
<feature type="strand" evidence="9">
    <location>
        <begin position="422"/>
        <end position="425"/>
    </location>
</feature>
<feature type="strand" evidence="9">
    <location>
        <begin position="429"/>
        <end position="435"/>
    </location>
</feature>
<feature type="helix" evidence="9">
    <location>
        <begin position="437"/>
        <end position="445"/>
    </location>
</feature>
<feature type="helix" evidence="9">
    <location>
        <begin position="451"/>
        <end position="453"/>
    </location>
</feature>
<feature type="strand" evidence="9">
    <location>
        <begin position="455"/>
        <end position="458"/>
    </location>
</feature>
<feature type="helix" evidence="9">
    <location>
        <begin position="468"/>
        <end position="478"/>
    </location>
</feature>
<feature type="strand" evidence="9">
    <location>
        <begin position="481"/>
        <end position="486"/>
    </location>
</feature>
<feature type="strand" evidence="9">
    <location>
        <begin position="491"/>
        <end position="497"/>
    </location>
</feature>
<feature type="helix" evidence="9">
    <location>
        <begin position="498"/>
        <end position="505"/>
    </location>
</feature>
<sequence length="509" mass="56458">MIMKTIKEINEKIKKGEAVVVTAEEMIKIVEEEGAKRAADYVDVVTTGTFGAMCSSGVFINFGHSDPPIKMLRIYLNNVEAYGGLAAVDAYIGAAQPNEDPDVDIDYGGAHVIEDLVRGKEVELYAEGYTTDCYPRKEVNVRITLDDVNQAIMVNPRNCYQTYAAATNSREEKIYTYMGILLPEYNNVHYSGAGQLNPLQNDYNPETKSFNTIGIGTRIFLGGGIGYVIGEGTQHNPPFGTLMVKGDLKQMNPKFIRAATMPRYGSTLYVGIGIPIPVLNEKIAERCAIRDEDIEVPIYDYGFPRRDRPLIAKTNYKVLRSGKITLNVNIDGKDVEKTVKTGSVSSYKMAREVAETLKQWILDGKFLLTERVDTLGRAENKPMKSPITLVKDILSKPPITAHSNISIMEAAKILIKHNINHLPIVDEHGKLVGIITSWDIAKALAQNKKTIEEIMTRNVITAHEDEPVDHVAIKMSKYNISGVPVVDDYRRVVGIVTSEDISRLFGGKK</sequence>
<organism>
    <name type="scientific">Methanocaldococcus jannaschii (strain ATCC 43067 / DSM 2661 / JAL-1 / JCM 10045 / NBRC 100440)</name>
    <name type="common">Methanococcus jannaschii</name>
    <dbReference type="NCBI Taxonomy" id="243232"/>
    <lineage>
        <taxon>Archaea</taxon>
        <taxon>Methanobacteriati</taxon>
        <taxon>Methanobacteriota</taxon>
        <taxon>Methanomada group</taxon>
        <taxon>Methanococci</taxon>
        <taxon>Methanococcales</taxon>
        <taxon>Methanocaldococcaceae</taxon>
        <taxon>Methanocaldococcus</taxon>
    </lineage>
</organism>
<proteinExistence type="evidence at protein level"/>
<dbReference type="EC" id="2.8.1.16" evidence="1"/>
<dbReference type="EMBL" id="L77117">
    <property type="protein sequence ID" value="AAB98080.1"/>
    <property type="molecule type" value="Genomic_DNA"/>
</dbReference>
<dbReference type="PIR" id="D64312">
    <property type="entry name" value="D64312"/>
</dbReference>
<dbReference type="PDB" id="3KPB">
    <property type="method" value="X-ray"/>
    <property type="resolution" value="1.60 A"/>
    <property type="chains" value="A/B/C/D=388-509"/>
</dbReference>
<dbReference type="PDB" id="3KPC">
    <property type="method" value="X-ray"/>
    <property type="resolution" value="1.79 A"/>
    <property type="chains" value="A=386-509"/>
</dbReference>
<dbReference type="PDB" id="3KPD">
    <property type="method" value="X-ray"/>
    <property type="resolution" value="2.91 A"/>
    <property type="chains" value="A/B/C/D=388-509"/>
</dbReference>
<dbReference type="PDBsum" id="3KPB"/>
<dbReference type="PDBsum" id="3KPC"/>
<dbReference type="PDBsum" id="3KPD"/>
<dbReference type="SMR" id="Q57564"/>
<dbReference type="FunCoup" id="Q57564">
    <property type="interactions" value="20"/>
</dbReference>
<dbReference type="STRING" id="243232.MJ_0100"/>
<dbReference type="PaxDb" id="243232-MJ_0100"/>
<dbReference type="EnsemblBacteria" id="AAB98080">
    <property type="protein sequence ID" value="AAB98080"/>
    <property type="gene ID" value="MJ_0100"/>
</dbReference>
<dbReference type="KEGG" id="mja:MJ_0100"/>
<dbReference type="eggNOG" id="arCOG00620">
    <property type="taxonomic scope" value="Archaea"/>
</dbReference>
<dbReference type="HOGENOM" id="CLU_043239_0_0_2"/>
<dbReference type="InParanoid" id="Q57564"/>
<dbReference type="OrthoDB" id="295172at2157"/>
<dbReference type="PhylomeDB" id="Q57564"/>
<dbReference type="BRENDA" id="2.8.1.16">
    <property type="organism ID" value="3260"/>
</dbReference>
<dbReference type="EvolutionaryTrace" id="Q57564"/>
<dbReference type="Proteomes" id="UP000000805">
    <property type="component" value="Chromosome"/>
</dbReference>
<dbReference type="GO" id="GO:0016740">
    <property type="term" value="F:transferase activity"/>
    <property type="evidence" value="ECO:0007669"/>
    <property type="project" value="UniProtKB-KW"/>
</dbReference>
<dbReference type="GO" id="GO:0009086">
    <property type="term" value="P:methionine biosynthetic process"/>
    <property type="evidence" value="ECO:0007669"/>
    <property type="project" value="UniProtKB-KW"/>
</dbReference>
<dbReference type="CDD" id="cd04605">
    <property type="entry name" value="CBS_pair_arch_MET2_assoc"/>
    <property type="match status" value="1"/>
</dbReference>
<dbReference type="Gene3D" id="3.10.580.10">
    <property type="entry name" value="CBS-domain"/>
    <property type="match status" value="1"/>
</dbReference>
<dbReference type="InterPro" id="IPR000644">
    <property type="entry name" value="CBS_dom"/>
</dbReference>
<dbReference type="InterPro" id="IPR046342">
    <property type="entry name" value="CBS_dom_sf"/>
</dbReference>
<dbReference type="InterPro" id="IPR051257">
    <property type="entry name" value="Diverse_CBS-Domain"/>
</dbReference>
<dbReference type="InterPro" id="IPR002708">
    <property type="entry name" value="HcyBio"/>
</dbReference>
<dbReference type="InterPro" id="IPR016426">
    <property type="entry name" value="MA1821-like"/>
</dbReference>
<dbReference type="PANTHER" id="PTHR43080:SF2">
    <property type="entry name" value="CBS DOMAIN-CONTAINING PROTEIN"/>
    <property type="match status" value="1"/>
</dbReference>
<dbReference type="PANTHER" id="PTHR43080">
    <property type="entry name" value="CBS DOMAIN-CONTAINING PROTEIN CBSX3, MITOCHONDRIAL"/>
    <property type="match status" value="1"/>
</dbReference>
<dbReference type="Pfam" id="PF00571">
    <property type="entry name" value="CBS"/>
    <property type="match status" value="2"/>
</dbReference>
<dbReference type="Pfam" id="PF01837">
    <property type="entry name" value="HcyBio"/>
    <property type="match status" value="1"/>
</dbReference>
<dbReference type="PIRSF" id="PIRSF004698">
    <property type="entry name" value="UCP004698_CBS_MJ0100"/>
    <property type="match status" value="1"/>
</dbReference>
<dbReference type="SMART" id="SM00116">
    <property type="entry name" value="CBS"/>
    <property type="match status" value="2"/>
</dbReference>
<dbReference type="SUPFAM" id="SSF54631">
    <property type="entry name" value="CBS-domain pair"/>
    <property type="match status" value="1"/>
</dbReference>
<dbReference type="PROSITE" id="PS51371">
    <property type="entry name" value="CBS"/>
    <property type="match status" value="2"/>
</dbReference>
<name>ASST_METJA</name>